<dbReference type="EC" id="3.7.1.24" evidence="2"/>
<dbReference type="EMBL" id="AF207529">
    <property type="protein sequence ID" value="AAF20929.2"/>
    <property type="molecule type" value="Genomic_DNA"/>
</dbReference>
<dbReference type="EMBL" id="CP003190">
    <property type="protein sequence ID" value="AGL87634.1"/>
    <property type="molecule type" value="Genomic_DNA"/>
</dbReference>
<dbReference type="SMR" id="A0A2C9EVE6"/>
<dbReference type="KEGG" id="pprc:PFLCHA0_c59060"/>
<dbReference type="eggNOG" id="ENOG502Z8Q4">
    <property type="taxonomic scope" value="Bacteria"/>
</dbReference>
<dbReference type="HOGENOM" id="CLU_055313_0_1_6"/>
<dbReference type="BRENDA" id="3.7.1.24">
    <property type="organism ID" value="5121"/>
</dbReference>
<dbReference type="Proteomes" id="UP000013940">
    <property type="component" value="Chromosome"/>
</dbReference>
<dbReference type="GO" id="GO:0016787">
    <property type="term" value="F:hydrolase activity"/>
    <property type="evidence" value="ECO:0007669"/>
    <property type="project" value="UniProtKB-KW"/>
</dbReference>
<dbReference type="GO" id="GO:0046872">
    <property type="term" value="F:metal ion binding"/>
    <property type="evidence" value="ECO:0007669"/>
    <property type="project" value="UniProtKB-KW"/>
</dbReference>
<dbReference type="InterPro" id="IPR041526">
    <property type="entry name" value="DAPG_hydrolase"/>
</dbReference>
<dbReference type="Pfam" id="PF18089">
    <property type="entry name" value="DAPG_hydrolase"/>
    <property type="match status" value="1"/>
</dbReference>
<organism>
    <name type="scientific">Pseudomonas protegens (strain DSM 19095 / LMG 27888 / CFBP 6595 / CHA0)</name>
    <dbReference type="NCBI Taxonomy" id="1124983"/>
    <lineage>
        <taxon>Bacteria</taxon>
        <taxon>Pseudomonadati</taxon>
        <taxon>Pseudomonadota</taxon>
        <taxon>Gammaproteobacteria</taxon>
        <taxon>Pseudomonadales</taxon>
        <taxon>Pseudomonadaceae</taxon>
        <taxon>Pseudomonas</taxon>
    </lineage>
</organism>
<evidence type="ECO:0000250" key="1">
    <source>
        <dbReference type="UniProtKB" id="Q4K423"/>
    </source>
</evidence>
<evidence type="ECO:0000269" key="2">
    <source>
    </source>
</evidence>
<evidence type="ECO:0000303" key="3">
    <source>
    </source>
</evidence>
<evidence type="ECO:0000303" key="4">
    <source>
    </source>
</evidence>
<evidence type="ECO:0000305" key="5"/>
<evidence type="ECO:0000312" key="6">
    <source>
        <dbReference type="EMBL" id="AGL87634.1"/>
    </source>
</evidence>
<gene>
    <name evidence="3" type="primary">phlG</name>
    <name evidence="6" type="ORF">PFLCHA0_c59060</name>
</gene>
<proteinExistence type="evidence at protein level"/>
<keyword id="KW-0378">Hydrolase</keyword>
<keyword id="KW-0479">Metal-binding</keyword>
<keyword id="KW-0862">Zinc</keyword>
<sequence>MAAICQFTPKDISMEARNMTPFTYFSLPMQKLFLRNQAAVRNKPYAKYFRSEMRVPLSAVRKIQQGPMALEDTLTPSIEDINRLLEPDFVSEESGYALLPGPMAYVQSRKFFPGCTAQMFKWWFIWHPAESERYTLWFPYAHVSNPCVHHQRLCDESLSFEERLYGNTFCASEYVGDRLMHLHIDFQQPASLGLNTDLYREAKIDGSVSALMSLADHPEVPVSLMVHLFKEVPDGMYLTSRYWVGAHPSMARFPGAEKAASLLKENGFGEAELETLAYEFAVHDMCEFNHLASFLPDLYREFGTPAA</sequence>
<name>PHLG_PSEPH</name>
<comment type="function">
    <text evidence="2">Hydrolase that specifically degrades the potent antimicrobial compound 2,4-diacetylphloroglucinol (DAPG) to equimolar amounts of mildly toxic monoacetylphloroglucinol (MAPG) and acetate. Does not degrade other compounds with structures similar to DAPG, such as MAPG and triacetylphloroglucinol, suggesting strict substrate specificity (PubMed:16391073). Degradation of DAPG to MAPG may provide an additional means of fine-tuning levels of this antibiotic or may help avoid accumulation of a metabolite that at high levels may become toxic to the producing bacterium (PubMed:16391073).</text>
</comment>
<comment type="catalytic activity">
    <reaction evidence="2">
        <text>2,4-diacetylphloroglucinol + H2O = 2-acetylphloroglucinol + acetate</text>
        <dbReference type="Rhea" id="RHEA:59184"/>
        <dbReference type="ChEBI" id="CHEBI:15377"/>
        <dbReference type="ChEBI" id="CHEBI:30089"/>
        <dbReference type="ChEBI" id="CHEBI:64344"/>
        <dbReference type="ChEBI" id="CHEBI:140662"/>
        <dbReference type="EC" id="3.7.1.24"/>
    </reaction>
</comment>
<comment type="cofactor">
    <cofactor evidence="1">
        <name>Zn(2+)</name>
        <dbReference type="ChEBI" id="CHEBI:29105"/>
    </cofactor>
</comment>
<comment type="activity regulation">
    <text evidence="2">Activity is strongly reduced by pyoluteorin, an antifungal compound produced by the bacterium.</text>
</comment>
<comment type="biophysicochemical properties">
    <kinetics>
        <KM evidence="2">140 uM for DAPG</KM>
        <text evidence="2">kcat is 33 sec(-1).</text>
    </kinetics>
    <phDependence>
        <text evidence="2">Activity is slightly enhanced at pH 6.6 and pH 6.0. Retains only 10% of its maximal activity at pH 7.6 and is inactive at pH 8.0.</text>
    </phDependence>
</comment>
<comment type="induction">
    <text evidence="2">Expression is induced by the GacS/GacA two-component system and repressed by the pathway-specific regulators PhlF and PhlH. Expression is not influenced by the substrate DAPG or the degradation product MAPG.</text>
</comment>
<comment type="disruption phenotype">
    <text evidence="2">The phlA-phlG double mutant cannot degrade DAPG.</text>
</comment>
<comment type="similarity">
    <text evidence="5">Belongs to the DAPG/phloretin hydrolase family.</text>
</comment>
<accession>A0A2C9EVE6</accession>
<accession>Q9RF01</accession>
<protein>
    <recommendedName>
        <fullName evidence="5">2,4-diacetylphloroglucinol hydrolase</fullName>
        <shortName evidence="4">DAPG hydrolase</shortName>
        <ecNumber evidence="2">3.7.1.24</ecNumber>
    </recommendedName>
</protein>
<reference key="1">
    <citation type="journal article" date="2000" name="J. Bacteriol.">
        <title>Autoinduction of 2,4-diacetylphloroglucinol biosynthesis in the biocontrol agent Pseudomonas fluorescens CHA0 and repression by the bacterial metabolites salicylate and pyoluteorin.</title>
        <authorList>
            <person name="Schnider-Keel U."/>
            <person name="Seematter A."/>
            <person name="Maurhofer M."/>
            <person name="Blumer C."/>
            <person name="Duffy B."/>
            <person name="Gigot-Bonnefoy C."/>
            <person name="Reimmann C."/>
            <person name="Notz R."/>
            <person name="Defago G."/>
            <person name="Haas D."/>
            <person name="Keel C."/>
        </authorList>
    </citation>
    <scope>NUCLEOTIDE SEQUENCE [GENOMIC DNA]</scope>
    <source>
        <strain>DSM 19095 / LMG 27888 / CFBP 6595 / CHA0</strain>
    </source>
</reference>
<reference key="2">
    <citation type="journal article" date="2014" name="Genome Announc.">
        <title>Full-genome sequence of the plant growth-promoting bacterium Pseudomonas protegens CHA0.</title>
        <authorList>
            <person name="Jousset A."/>
            <person name="Schuldes J."/>
            <person name="Keel C."/>
            <person name="Maurhofer M."/>
            <person name="Daniel R."/>
            <person name="Scheu S."/>
            <person name="Thuermer A."/>
        </authorList>
    </citation>
    <scope>NUCLEOTIDE SEQUENCE [LARGE SCALE GENOMIC DNA]</scope>
    <source>
        <strain>DSM 19095 / LMG 27888 / CFBP 6595 / CHA0</strain>
    </source>
</reference>
<reference key="3">
    <citation type="journal article" date="2006" name="Appl. Environ. Microbiol.">
        <title>Characterization of PhlG, a hydrolase that specifically degrades the antifungal compound 2,4-diacetylphloroglucinol in the biocontrol agent Pseudomonas fluorescens CHA0.</title>
        <authorList>
            <person name="Bottiglieri M."/>
            <person name="Keel C."/>
        </authorList>
    </citation>
    <scope>FUNCTION</scope>
    <scope>CATALYTIC ACTIVITY</scope>
    <scope>ACTIVITY REGULATION</scope>
    <scope>BIOPHYSICOCHEMICAL PROPERTIES</scope>
    <scope>INDUCTION</scope>
    <scope>DISRUPTION PHENOTYPE</scope>
    <source>
        <strain>DSM 19095 / LMG 27888 / CFBP 6595 / CHA0</strain>
    </source>
</reference>
<feature type="chain" id="PRO_0000450527" description="2,4-diacetylphloroglucinol hydrolase">
    <location>
        <begin position="1"/>
        <end position="307"/>
    </location>
</feature>
<feature type="binding site" evidence="1">
    <location>
        <position position="142"/>
    </location>
    <ligand>
        <name>Zn(2+)</name>
        <dbReference type="ChEBI" id="CHEBI:29105"/>
    </ligand>
</feature>
<feature type="binding site" evidence="1">
    <location>
        <position position="173"/>
    </location>
    <ligand>
        <name>Zn(2+)</name>
        <dbReference type="ChEBI" id="CHEBI:29105"/>
    </ligand>
</feature>
<feature type="binding site" evidence="1">
    <location>
        <position position="283"/>
    </location>
    <ligand>
        <name>Zn(2+)</name>
        <dbReference type="ChEBI" id="CHEBI:29105"/>
    </ligand>
</feature>
<feature type="binding site" evidence="1">
    <location>
        <position position="287"/>
    </location>
    <ligand>
        <name>Zn(2+)</name>
        <dbReference type="ChEBI" id="CHEBI:29105"/>
    </ligand>
</feature>